<keyword id="KW-0067">ATP-binding</keyword>
<keyword id="KW-0997">Cell inner membrane</keyword>
<keyword id="KW-1003">Cell membrane</keyword>
<keyword id="KW-0472">Membrane</keyword>
<keyword id="KW-0547">Nucleotide-binding</keyword>
<keyword id="KW-1278">Translocase</keyword>
<keyword id="KW-0813">Transport</keyword>
<protein>
    <recommendedName>
        <fullName evidence="1">Vitamin B12 import ATP-binding protein BtuD</fullName>
        <ecNumber evidence="1">7.6.2.8</ecNumber>
    </recommendedName>
    <alternativeName>
        <fullName evidence="1">Vitamin B12-transporting ATPase</fullName>
    </alternativeName>
</protein>
<proteinExistence type="inferred from homology"/>
<feature type="chain" id="PRO_1000148796" description="Vitamin B12 import ATP-binding protein BtuD">
    <location>
        <begin position="1"/>
        <end position="251"/>
    </location>
</feature>
<feature type="domain" description="ABC transporter" evidence="1">
    <location>
        <begin position="2"/>
        <end position="236"/>
    </location>
</feature>
<feature type="binding site" evidence="1">
    <location>
        <begin position="30"/>
        <end position="37"/>
    </location>
    <ligand>
        <name>ATP</name>
        <dbReference type="ChEBI" id="CHEBI:30616"/>
    </ligand>
</feature>
<dbReference type="EC" id="7.6.2.8" evidence="1"/>
<dbReference type="EMBL" id="CP001233">
    <property type="protein sequence ID" value="ACP05517.1"/>
    <property type="molecule type" value="Genomic_DNA"/>
</dbReference>
<dbReference type="RefSeq" id="WP_000621843.1">
    <property type="nucleotide sequence ID" value="NC_012578.1"/>
</dbReference>
<dbReference type="SMR" id="C3LLU1"/>
<dbReference type="KEGG" id="vcm:VCM66_1200"/>
<dbReference type="HOGENOM" id="CLU_000604_1_11_6"/>
<dbReference type="Proteomes" id="UP000001217">
    <property type="component" value="Chromosome I"/>
</dbReference>
<dbReference type="GO" id="GO:0005886">
    <property type="term" value="C:plasma membrane"/>
    <property type="evidence" value="ECO:0007669"/>
    <property type="project" value="UniProtKB-SubCell"/>
</dbReference>
<dbReference type="GO" id="GO:0015420">
    <property type="term" value="F:ABC-type vitamin B12 transporter activity"/>
    <property type="evidence" value="ECO:0007669"/>
    <property type="project" value="UniProtKB-UniRule"/>
</dbReference>
<dbReference type="GO" id="GO:0005524">
    <property type="term" value="F:ATP binding"/>
    <property type="evidence" value="ECO:0007669"/>
    <property type="project" value="UniProtKB-KW"/>
</dbReference>
<dbReference type="GO" id="GO:0016887">
    <property type="term" value="F:ATP hydrolysis activity"/>
    <property type="evidence" value="ECO:0007669"/>
    <property type="project" value="InterPro"/>
</dbReference>
<dbReference type="CDD" id="cd03214">
    <property type="entry name" value="ABC_Iron-Siderophores_B12_Hemin"/>
    <property type="match status" value="1"/>
</dbReference>
<dbReference type="FunFam" id="3.40.50.300:FF:000462">
    <property type="entry name" value="Vitamin B12 import ATP-binding protein BtuD"/>
    <property type="match status" value="1"/>
</dbReference>
<dbReference type="Gene3D" id="3.40.50.300">
    <property type="entry name" value="P-loop containing nucleotide triphosphate hydrolases"/>
    <property type="match status" value="1"/>
</dbReference>
<dbReference type="HAMAP" id="MF_01005">
    <property type="entry name" value="BtuD"/>
    <property type="match status" value="1"/>
</dbReference>
<dbReference type="InterPro" id="IPR003593">
    <property type="entry name" value="AAA+_ATPase"/>
</dbReference>
<dbReference type="InterPro" id="IPR003439">
    <property type="entry name" value="ABC_transporter-like_ATP-bd"/>
</dbReference>
<dbReference type="InterPro" id="IPR023693">
    <property type="entry name" value="ABC_transptr_BtuD"/>
</dbReference>
<dbReference type="InterPro" id="IPR050153">
    <property type="entry name" value="Metal_Ion_Import_ABC"/>
</dbReference>
<dbReference type="InterPro" id="IPR027417">
    <property type="entry name" value="P-loop_NTPase"/>
</dbReference>
<dbReference type="NCBIfam" id="NF002981">
    <property type="entry name" value="PRK03695.1"/>
    <property type="match status" value="1"/>
</dbReference>
<dbReference type="PANTHER" id="PTHR42734">
    <property type="entry name" value="METAL TRANSPORT SYSTEM ATP-BINDING PROTEIN TM_0124-RELATED"/>
    <property type="match status" value="1"/>
</dbReference>
<dbReference type="PANTHER" id="PTHR42734:SF18">
    <property type="entry name" value="VITAMIN B12 IMPORT ATP-BINDING PROTEIN BTUD"/>
    <property type="match status" value="1"/>
</dbReference>
<dbReference type="Pfam" id="PF00005">
    <property type="entry name" value="ABC_tran"/>
    <property type="match status" value="1"/>
</dbReference>
<dbReference type="SMART" id="SM00382">
    <property type="entry name" value="AAA"/>
    <property type="match status" value="1"/>
</dbReference>
<dbReference type="SUPFAM" id="SSF52540">
    <property type="entry name" value="P-loop containing nucleoside triphosphate hydrolases"/>
    <property type="match status" value="1"/>
</dbReference>
<dbReference type="PROSITE" id="PS50893">
    <property type="entry name" value="ABC_TRANSPORTER_2"/>
    <property type="match status" value="1"/>
</dbReference>
<organism>
    <name type="scientific">Vibrio cholerae serotype O1 (strain M66-2)</name>
    <dbReference type="NCBI Taxonomy" id="579112"/>
    <lineage>
        <taxon>Bacteria</taxon>
        <taxon>Pseudomonadati</taxon>
        <taxon>Pseudomonadota</taxon>
        <taxon>Gammaproteobacteria</taxon>
        <taxon>Vibrionales</taxon>
        <taxon>Vibrionaceae</taxon>
        <taxon>Vibrio</taxon>
    </lineage>
</organism>
<comment type="function">
    <text evidence="1">Part of the ABC transporter complex BtuCDF involved in vitamin B12 import. Responsible for energy coupling to the transport system.</text>
</comment>
<comment type="catalytic activity">
    <reaction evidence="1">
        <text>an R-cob(III)alamin(out) + ATP + H2O = an R-cob(III)alamin(in) + ADP + phosphate + H(+)</text>
        <dbReference type="Rhea" id="RHEA:17873"/>
        <dbReference type="ChEBI" id="CHEBI:15377"/>
        <dbReference type="ChEBI" id="CHEBI:15378"/>
        <dbReference type="ChEBI" id="CHEBI:30616"/>
        <dbReference type="ChEBI" id="CHEBI:43474"/>
        <dbReference type="ChEBI" id="CHEBI:140785"/>
        <dbReference type="ChEBI" id="CHEBI:456216"/>
        <dbReference type="EC" id="7.6.2.8"/>
    </reaction>
</comment>
<comment type="subunit">
    <text evidence="1">The complex is composed of two ATP-binding proteins (BtuD), two transmembrane proteins (BtuC) and a solute-binding protein (BtuF).</text>
</comment>
<comment type="subcellular location">
    <subcellularLocation>
        <location evidence="1">Cell inner membrane</location>
        <topology evidence="1">Peripheral membrane protein</topology>
    </subcellularLocation>
</comment>
<comment type="similarity">
    <text evidence="1">Belongs to the ABC transporter superfamily. Vitamin B12 importer (TC 3.A.1.13.1) family.</text>
</comment>
<accession>C3LLU1</accession>
<evidence type="ECO:0000255" key="1">
    <source>
        <dbReference type="HAMAP-Rule" id="MF_01005"/>
    </source>
</evidence>
<name>BTUD_VIBCM</name>
<gene>
    <name evidence="1" type="primary">btuD</name>
    <name type="ordered locus">VCM66_1200</name>
</gene>
<sequence length="251" mass="27531">MIRVNSLQVDSRLLPLSLQANAGEVWHVIGPNGCGKSTLLAALAGMIPFSGSVQVDGLDVSQASLSELARHRAYLAQNNKPSFQLHVFQYLALSVPANVALECSEVASEIDQISRLLNIDDKLHRSIHQLSGGEWQRVRLAGSCLQVSPVLNPSARLLIWDEPAAPLDIAQESLLYRLIERMAGQGLTVIMANHDLNRTLRHADQVLLLSRGVLYRAGSAKEVLTQEVLQSVFGTSIRRVELEGHPHLLFD</sequence>
<reference key="1">
    <citation type="journal article" date="2008" name="PLoS ONE">
        <title>A recalibrated molecular clock and independent origins for the cholera pandemic clones.</title>
        <authorList>
            <person name="Feng L."/>
            <person name="Reeves P.R."/>
            <person name="Lan R."/>
            <person name="Ren Y."/>
            <person name="Gao C."/>
            <person name="Zhou Z."/>
            <person name="Ren Y."/>
            <person name="Cheng J."/>
            <person name="Wang W."/>
            <person name="Wang J."/>
            <person name="Qian W."/>
            <person name="Li D."/>
            <person name="Wang L."/>
        </authorList>
    </citation>
    <scope>NUCLEOTIDE SEQUENCE [LARGE SCALE GENOMIC DNA]</scope>
    <source>
        <strain>M66-2</strain>
    </source>
</reference>